<organism>
    <name type="scientific">Caldicellulosiruptor saccharolyticus (strain ATCC 43494 / DSM 8903 / Tp8T 6331)</name>
    <dbReference type="NCBI Taxonomy" id="351627"/>
    <lineage>
        <taxon>Bacteria</taxon>
        <taxon>Bacillati</taxon>
        <taxon>Bacillota</taxon>
        <taxon>Bacillota incertae sedis</taxon>
        <taxon>Caldicellulosiruptorales</taxon>
        <taxon>Caldicellulosiruptoraceae</taxon>
        <taxon>Caldicellulosiruptor</taxon>
    </lineage>
</organism>
<proteinExistence type="inferred from homology"/>
<evidence type="ECO:0000255" key="1">
    <source>
        <dbReference type="HAMAP-Rule" id="MF_00281"/>
    </source>
</evidence>
<protein>
    <recommendedName>
        <fullName evidence="1">Phenylalanine--tRNA ligase alpha subunit</fullName>
        <ecNumber evidence="1">6.1.1.20</ecNumber>
    </recommendedName>
    <alternativeName>
        <fullName evidence="1">Phenylalanyl-tRNA synthetase alpha subunit</fullName>
        <shortName evidence="1">PheRS</shortName>
    </alternativeName>
</protein>
<feature type="chain" id="PRO_1000006808" description="Phenylalanine--tRNA ligase alpha subunit">
    <location>
        <begin position="1"/>
        <end position="340"/>
    </location>
</feature>
<feature type="binding site" evidence="1">
    <location>
        <position position="254"/>
    </location>
    <ligand>
        <name>Mg(2+)</name>
        <dbReference type="ChEBI" id="CHEBI:18420"/>
        <note>shared with beta subunit</note>
    </ligand>
</feature>
<keyword id="KW-0030">Aminoacyl-tRNA synthetase</keyword>
<keyword id="KW-0067">ATP-binding</keyword>
<keyword id="KW-0963">Cytoplasm</keyword>
<keyword id="KW-0436">Ligase</keyword>
<keyword id="KW-0460">Magnesium</keyword>
<keyword id="KW-0479">Metal-binding</keyword>
<keyword id="KW-0547">Nucleotide-binding</keyword>
<keyword id="KW-0648">Protein biosynthesis</keyword>
<gene>
    <name evidence="1" type="primary">pheS</name>
    <name type="ordered locus">Csac_1848</name>
</gene>
<accession>A4XKJ8</accession>
<name>SYFA_CALS8</name>
<sequence length="340" mass="39082">MNIDISNLKVQCMGEIANVKNLKELEEFQIKYLGKKGIVKNMLKELSTLPSDKRAQAGRQLNELRDFIESQINELRKKFEEEEKQKRIQKERIDVTIPGKRVEVGAIHILSQVQKEISEIFLSMGYEIAEGPEVELDYYNFEALNIPADHPARDTQDTFYISDDVLLRTHTSPVQIRVMKSKKPPIKIISPGRVYRSDEVDATHSPIFHQIEGLFVDKGVTMADLKGTLEVFAKRFFGEETRVRFRPHHFPFTEPSAEVDISCIFCGGKGCKTCKGEGWIEILGAGMVHRKVLANCDIDPDEYTGFAFGMGVERIALLKYEIEDIRLFYENDLRFLKQFR</sequence>
<dbReference type="EC" id="6.1.1.20" evidence="1"/>
<dbReference type="EMBL" id="CP000679">
    <property type="protein sequence ID" value="ABP67433.1"/>
    <property type="molecule type" value="Genomic_DNA"/>
</dbReference>
<dbReference type="RefSeq" id="WP_011917367.1">
    <property type="nucleotide sequence ID" value="NC_009437.1"/>
</dbReference>
<dbReference type="SMR" id="A4XKJ8"/>
<dbReference type="STRING" id="351627.Csac_1848"/>
<dbReference type="KEGG" id="csc:Csac_1848"/>
<dbReference type="eggNOG" id="COG0016">
    <property type="taxonomic scope" value="Bacteria"/>
</dbReference>
<dbReference type="HOGENOM" id="CLU_025086_0_1_9"/>
<dbReference type="OrthoDB" id="9800719at2"/>
<dbReference type="Proteomes" id="UP000000256">
    <property type="component" value="Chromosome"/>
</dbReference>
<dbReference type="GO" id="GO:0005737">
    <property type="term" value="C:cytoplasm"/>
    <property type="evidence" value="ECO:0007669"/>
    <property type="project" value="UniProtKB-SubCell"/>
</dbReference>
<dbReference type="GO" id="GO:0005524">
    <property type="term" value="F:ATP binding"/>
    <property type="evidence" value="ECO:0007669"/>
    <property type="project" value="UniProtKB-UniRule"/>
</dbReference>
<dbReference type="GO" id="GO:0140096">
    <property type="term" value="F:catalytic activity, acting on a protein"/>
    <property type="evidence" value="ECO:0007669"/>
    <property type="project" value="UniProtKB-ARBA"/>
</dbReference>
<dbReference type="GO" id="GO:0000287">
    <property type="term" value="F:magnesium ion binding"/>
    <property type="evidence" value="ECO:0007669"/>
    <property type="project" value="UniProtKB-UniRule"/>
</dbReference>
<dbReference type="GO" id="GO:0004826">
    <property type="term" value="F:phenylalanine-tRNA ligase activity"/>
    <property type="evidence" value="ECO:0007669"/>
    <property type="project" value="UniProtKB-UniRule"/>
</dbReference>
<dbReference type="GO" id="GO:0016740">
    <property type="term" value="F:transferase activity"/>
    <property type="evidence" value="ECO:0007669"/>
    <property type="project" value="UniProtKB-ARBA"/>
</dbReference>
<dbReference type="GO" id="GO:0000049">
    <property type="term" value="F:tRNA binding"/>
    <property type="evidence" value="ECO:0007669"/>
    <property type="project" value="InterPro"/>
</dbReference>
<dbReference type="GO" id="GO:0006432">
    <property type="term" value="P:phenylalanyl-tRNA aminoacylation"/>
    <property type="evidence" value="ECO:0007669"/>
    <property type="project" value="UniProtKB-UniRule"/>
</dbReference>
<dbReference type="CDD" id="cd00496">
    <property type="entry name" value="PheRS_alpha_core"/>
    <property type="match status" value="1"/>
</dbReference>
<dbReference type="FunFam" id="3.30.930.10:FF:000003">
    <property type="entry name" value="Phenylalanine--tRNA ligase alpha subunit"/>
    <property type="match status" value="1"/>
</dbReference>
<dbReference type="Gene3D" id="3.30.930.10">
    <property type="entry name" value="Bira Bifunctional Protein, Domain 2"/>
    <property type="match status" value="1"/>
</dbReference>
<dbReference type="HAMAP" id="MF_00281">
    <property type="entry name" value="Phe_tRNA_synth_alpha1"/>
    <property type="match status" value="1"/>
</dbReference>
<dbReference type="InterPro" id="IPR006195">
    <property type="entry name" value="aa-tRNA-synth_II"/>
</dbReference>
<dbReference type="InterPro" id="IPR045864">
    <property type="entry name" value="aa-tRNA-synth_II/BPL/LPL"/>
</dbReference>
<dbReference type="InterPro" id="IPR004529">
    <property type="entry name" value="Phe-tRNA-synth_IIc_asu"/>
</dbReference>
<dbReference type="InterPro" id="IPR004188">
    <property type="entry name" value="Phe-tRNA_ligase_II_N"/>
</dbReference>
<dbReference type="InterPro" id="IPR022911">
    <property type="entry name" value="Phe_tRNA_ligase_alpha1_bac"/>
</dbReference>
<dbReference type="InterPro" id="IPR002319">
    <property type="entry name" value="Phenylalanyl-tRNA_Synthase"/>
</dbReference>
<dbReference type="InterPro" id="IPR010978">
    <property type="entry name" value="tRNA-bd_arm"/>
</dbReference>
<dbReference type="NCBIfam" id="TIGR00468">
    <property type="entry name" value="pheS"/>
    <property type="match status" value="1"/>
</dbReference>
<dbReference type="PANTHER" id="PTHR11538:SF41">
    <property type="entry name" value="PHENYLALANINE--TRNA LIGASE, MITOCHONDRIAL"/>
    <property type="match status" value="1"/>
</dbReference>
<dbReference type="PANTHER" id="PTHR11538">
    <property type="entry name" value="PHENYLALANYL-TRNA SYNTHETASE"/>
    <property type="match status" value="1"/>
</dbReference>
<dbReference type="Pfam" id="PF02912">
    <property type="entry name" value="Phe_tRNA-synt_N"/>
    <property type="match status" value="1"/>
</dbReference>
<dbReference type="Pfam" id="PF01409">
    <property type="entry name" value="tRNA-synt_2d"/>
    <property type="match status" value="1"/>
</dbReference>
<dbReference type="SUPFAM" id="SSF55681">
    <property type="entry name" value="Class II aaRS and biotin synthetases"/>
    <property type="match status" value="1"/>
</dbReference>
<dbReference type="SUPFAM" id="SSF46589">
    <property type="entry name" value="tRNA-binding arm"/>
    <property type="match status" value="1"/>
</dbReference>
<dbReference type="PROSITE" id="PS50862">
    <property type="entry name" value="AA_TRNA_LIGASE_II"/>
    <property type="match status" value="1"/>
</dbReference>
<reference key="1">
    <citation type="submission" date="2007-04" db="EMBL/GenBank/DDBJ databases">
        <title>Genome sequence of the thermophilic hydrogen-producing bacterium Caldicellulosiruptor saccharolyticus DSM 8903.</title>
        <authorList>
            <person name="Copeland A."/>
            <person name="Lucas S."/>
            <person name="Lapidus A."/>
            <person name="Barry K."/>
            <person name="Detter J.C."/>
            <person name="Glavina del Rio T."/>
            <person name="Hammon N."/>
            <person name="Israni S."/>
            <person name="Dalin E."/>
            <person name="Tice H."/>
            <person name="Pitluck S."/>
            <person name="Kiss H."/>
            <person name="Brettin T."/>
            <person name="Bruce D."/>
            <person name="Han C."/>
            <person name="Schmutz J."/>
            <person name="Larimer F."/>
            <person name="Land M."/>
            <person name="Hauser L."/>
            <person name="Kyrpides N."/>
            <person name="Lykidis A."/>
            <person name="van de Werken H.J.G."/>
            <person name="Verhaart M.R.A."/>
            <person name="VanFossen A.L."/>
            <person name="Lewis D.L."/>
            <person name="Nichols J.D."/>
            <person name="Goorissen H.P."/>
            <person name="van Niel E.W.J."/>
            <person name="Stams F.J.M."/>
            <person name="Willquist K.U."/>
            <person name="Ward D.E."/>
            <person name="van der Oost J."/>
            <person name="Kelly R.M."/>
            <person name="Kengen S.M.W."/>
            <person name="Richardson P."/>
        </authorList>
    </citation>
    <scope>NUCLEOTIDE SEQUENCE [LARGE SCALE GENOMIC DNA]</scope>
    <source>
        <strain>ATCC 43494 / DSM 8903 / Tp8T 6331</strain>
    </source>
</reference>
<comment type="catalytic activity">
    <reaction evidence="1">
        <text>tRNA(Phe) + L-phenylalanine + ATP = L-phenylalanyl-tRNA(Phe) + AMP + diphosphate + H(+)</text>
        <dbReference type="Rhea" id="RHEA:19413"/>
        <dbReference type="Rhea" id="RHEA-COMP:9668"/>
        <dbReference type="Rhea" id="RHEA-COMP:9699"/>
        <dbReference type="ChEBI" id="CHEBI:15378"/>
        <dbReference type="ChEBI" id="CHEBI:30616"/>
        <dbReference type="ChEBI" id="CHEBI:33019"/>
        <dbReference type="ChEBI" id="CHEBI:58095"/>
        <dbReference type="ChEBI" id="CHEBI:78442"/>
        <dbReference type="ChEBI" id="CHEBI:78531"/>
        <dbReference type="ChEBI" id="CHEBI:456215"/>
        <dbReference type="EC" id="6.1.1.20"/>
    </reaction>
</comment>
<comment type="cofactor">
    <cofactor evidence="1">
        <name>Mg(2+)</name>
        <dbReference type="ChEBI" id="CHEBI:18420"/>
    </cofactor>
    <text evidence="1">Binds 2 magnesium ions per tetramer.</text>
</comment>
<comment type="subunit">
    <text evidence="1">Tetramer of two alpha and two beta subunits.</text>
</comment>
<comment type="subcellular location">
    <subcellularLocation>
        <location evidence="1">Cytoplasm</location>
    </subcellularLocation>
</comment>
<comment type="similarity">
    <text evidence="1">Belongs to the class-II aminoacyl-tRNA synthetase family. Phe-tRNA synthetase alpha subunit type 1 subfamily.</text>
</comment>